<dbReference type="EMBL" id="CP001029">
    <property type="protein sequence ID" value="ACB80310.1"/>
    <property type="molecule type" value="Genomic_DNA"/>
</dbReference>
<dbReference type="RefSeq" id="WP_012454045.1">
    <property type="nucleotide sequence ID" value="NC_010725.1"/>
</dbReference>
<dbReference type="SMR" id="B1Z777"/>
<dbReference type="STRING" id="441620.Mpop_2148"/>
<dbReference type="KEGG" id="mpo:Mpop_2148"/>
<dbReference type="eggNOG" id="COG0256">
    <property type="taxonomic scope" value="Bacteria"/>
</dbReference>
<dbReference type="HOGENOM" id="CLU_098841_0_1_5"/>
<dbReference type="OrthoDB" id="9810939at2"/>
<dbReference type="Proteomes" id="UP000007136">
    <property type="component" value="Chromosome"/>
</dbReference>
<dbReference type="GO" id="GO:0022625">
    <property type="term" value="C:cytosolic large ribosomal subunit"/>
    <property type="evidence" value="ECO:0007669"/>
    <property type="project" value="TreeGrafter"/>
</dbReference>
<dbReference type="GO" id="GO:0008097">
    <property type="term" value="F:5S rRNA binding"/>
    <property type="evidence" value="ECO:0007669"/>
    <property type="project" value="TreeGrafter"/>
</dbReference>
<dbReference type="GO" id="GO:0003735">
    <property type="term" value="F:structural constituent of ribosome"/>
    <property type="evidence" value="ECO:0007669"/>
    <property type="project" value="InterPro"/>
</dbReference>
<dbReference type="GO" id="GO:0006412">
    <property type="term" value="P:translation"/>
    <property type="evidence" value="ECO:0007669"/>
    <property type="project" value="UniProtKB-UniRule"/>
</dbReference>
<dbReference type="CDD" id="cd00432">
    <property type="entry name" value="Ribosomal_L18_L5e"/>
    <property type="match status" value="1"/>
</dbReference>
<dbReference type="FunFam" id="3.30.420.100:FF:000001">
    <property type="entry name" value="50S ribosomal protein L18"/>
    <property type="match status" value="1"/>
</dbReference>
<dbReference type="Gene3D" id="3.30.420.100">
    <property type="match status" value="1"/>
</dbReference>
<dbReference type="HAMAP" id="MF_01337_B">
    <property type="entry name" value="Ribosomal_uL18_B"/>
    <property type="match status" value="1"/>
</dbReference>
<dbReference type="InterPro" id="IPR004389">
    <property type="entry name" value="Ribosomal_uL18_bac-type"/>
</dbReference>
<dbReference type="InterPro" id="IPR005484">
    <property type="entry name" value="Ribosomal_uL18_bac/euk"/>
</dbReference>
<dbReference type="NCBIfam" id="TIGR00060">
    <property type="entry name" value="L18_bact"/>
    <property type="match status" value="1"/>
</dbReference>
<dbReference type="PANTHER" id="PTHR12899">
    <property type="entry name" value="39S RIBOSOMAL PROTEIN L18, MITOCHONDRIAL"/>
    <property type="match status" value="1"/>
</dbReference>
<dbReference type="PANTHER" id="PTHR12899:SF3">
    <property type="entry name" value="LARGE RIBOSOMAL SUBUNIT PROTEIN UL18M"/>
    <property type="match status" value="1"/>
</dbReference>
<dbReference type="Pfam" id="PF00861">
    <property type="entry name" value="Ribosomal_L18p"/>
    <property type="match status" value="1"/>
</dbReference>
<dbReference type="SUPFAM" id="SSF53137">
    <property type="entry name" value="Translational machinery components"/>
    <property type="match status" value="1"/>
</dbReference>
<protein>
    <recommendedName>
        <fullName evidence="1">Large ribosomal subunit protein uL18</fullName>
    </recommendedName>
    <alternativeName>
        <fullName evidence="2">50S ribosomal protein L18</fullName>
    </alternativeName>
</protein>
<feature type="chain" id="PRO_1000142689" description="Large ribosomal subunit protein uL18">
    <location>
        <begin position="1"/>
        <end position="120"/>
    </location>
</feature>
<evidence type="ECO:0000255" key="1">
    <source>
        <dbReference type="HAMAP-Rule" id="MF_01337"/>
    </source>
</evidence>
<evidence type="ECO:0000305" key="2"/>
<gene>
    <name evidence="1" type="primary">rplR</name>
    <name type="ordered locus">Mpop_2148</name>
</gene>
<name>RL18_METPB</name>
<keyword id="KW-0687">Ribonucleoprotein</keyword>
<keyword id="KW-0689">Ribosomal protein</keyword>
<keyword id="KW-0694">RNA-binding</keyword>
<keyword id="KW-0699">rRNA-binding</keyword>
<proteinExistence type="inferred from homology"/>
<comment type="function">
    <text evidence="1">This is one of the proteins that bind and probably mediate the attachment of the 5S RNA into the large ribosomal subunit, where it forms part of the central protuberance.</text>
</comment>
<comment type="subunit">
    <text evidence="1">Part of the 50S ribosomal subunit; part of the 5S rRNA/L5/L18/L25 subcomplex. Contacts the 5S and 23S rRNAs.</text>
</comment>
<comment type="similarity">
    <text evidence="1">Belongs to the universal ribosomal protein uL18 family.</text>
</comment>
<accession>B1Z777</accession>
<sequence length="120" mass="12827">MSNKNEALLRRKARVRRALKATANGRPRLSVFRSSKQIYVQVIDDAVGRTLAAASSLDKDLKASLKTGADKAAAEAVGKLVAERAKAAGVTKVVFDRSGYIFHGRVKALADAAREGGLDF</sequence>
<reference key="1">
    <citation type="submission" date="2008-04" db="EMBL/GenBank/DDBJ databases">
        <title>Complete sequence of chromosome of Methylobacterium populi BJ001.</title>
        <authorList>
            <consortium name="US DOE Joint Genome Institute"/>
            <person name="Copeland A."/>
            <person name="Lucas S."/>
            <person name="Lapidus A."/>
            <person name="Glavina del Rio T."/>
            <person name="Dalin E."/>
            <person name="Tice H."/>
            <person name="Bruce D."/>
            <person name="Goodwin L."/>
            <person name="Pitluck S."/>
            <person name="Chertkov O."/>
            <person name="Brettin T."/>
            <person name="Detter J.C."/>
            <person name="Han C."/>
            <person name="Kuske C.R."/>
            <person name="Schmutz J."/>
            <person name="Larimer F."/>
            <person name="Land M."/>
            <person name="Hauser L."/>
            <person name="Kyrpides N."/>
            <person name="Mikhailova N."/>
            <person name="Marx C."/>
            <person name="Richardson P."/>
        </authorList>
    </citation>
    <scope>NUCLEOTIDE SEQUENCE [LARGE SCALE GENOMIC DNA]</scope>
    <source>
        <strain>ATCC BAA-705 / NCIMB 13946 / BJ001</strain>
    </source>
</reference>
<organism>
    <name type="scientific">Methylorubrum populi (strain ATCC BAA-705 / NCIMB 13946 / BJ001)</name>
    <name type="common">Methylobacterium populi</name>
    <dbReference type="NCBI Taxonomy" id="441620"/>
    <lineage>
        <taxon>Bacteria</taxon>
        <taxon>Pseudomonadati</taxon>
        <taxon>Pseudomonadota</taxon>
        <taxon>Alphaproteobacteria</taxon>
        <taxon>Hyphomicrobiales</taxon>
        <taxon>Methylobacteriaceae</taxon>
        <taxon>Methylorubrum</taxon>
    </lineage>
</organism>